<feature type="chain" id="PRO_0000350763" description="UPF0652 protein C16A11.03c">
    <location>
        <begin position="1"/>
        <end position="466"/>
    </location>
</feature>
<evidence type="ECO:0000269" key="1">
    <source>
    </source>
</evidence>
<evidence type="ECO:0000305" key="2"/>
<name>YCL3_SCHPO</name>
<proteinExistence type="inferred from homology"/>
<dbReference type="EMBL" id="CU329672">
    <property type="protein sequence ID" value="CAB53075.1"/>
    <property type="molecule type" value="Genomic_DNA"/>
</dbReference>
<dbReference type="PIR" id="T41076">
    <property type="entry name" value="T41076"/>
</dbReference>
<dbReference type="RefSeq" id="NP_587990.1">
    <property type="nucleotide sequence ID" value="NM_001022981.2"/>
</dbReference>
<dbReference type="BioGRID" id="275803">
    <property type="interactions" value="12"/>
</dbReference>
<dbReference type="PaxDb" id="4896-SPCC16A11.03c.1"/>
<dbReference type="EnsemblFungi" id="SPCC16A11.03c.1">
    <property type="protein sequence ID" value="SPCC16A11.03c.1:pep"/>
    <property type="gene ID" value="SPCC16A11.03c"/>
</dbReference>
<dbReference type="KEGG" id="spo:2539233"/>
<dbReference type="PomBase" id="SPCC16A11.03c"/>
<dbReference type="VEuPathDB" id="FungiDB:SPCC16A11.03c"/>
<dbReference type="eggNOG" id="ENOG502QRJJ">
    <property type="taxonomic scope" value="Eukaryota"/>
</dbReference>
<dbReference type="HOGENOM" id="CLU_021807_0_0_1"/>
<dbReference type="InParanoid" id="Q9USN2"/>
<dbReference type="OMA" id="EKQAGMQ"/>
<dbReference type="PhylomeDB" id="Q9USN2"/>
<dbReference type="PRO" id="PR:Q9USN2"/>
<dbReference type="Proteomes" id="UP000002485">
    <property type="component" value="Chromosome III"/>
</dbReference>
<dbReference type="GO" id="GO:0005829">
    <property type="term" value="C:cytosol"/>
    <property type="evidence" value="ECO:0007005"/>
    <property type="project" value="PomBase"/>
</dbReference>
<dbReference type="GO" id="GO:0005634">
    <property type="term" value="C:nucleus"/>
    <property type="evidence" value="ECO:0007005"/>
    <property type="project" value="PomBase"/>
</dbReference>
<dbReference type="InterPro" id="IPR018553">
    <property type="entry name" value="DUF2009"/>
</dbReference>
<dbReference type="PANTHER" id="PTHR31560:SF3">
    <property type="entry name" value="UPF0652 PROTEIN C16A11.03C"/>
    <property type="match status" value="1"/>
</dbReference>
<dbReference type="PANTHER" id="PTHR31560">
    <property type="entry name" value="UPF0652 PROTEIN C16A11.03C-RELATED"/>
    <property type="match status" value="1"/>
</dbReference>
<dbReference type="Pfam" id="PF09418">
    <property type="entry name" value="DUF2009"/>
    <property type="match status" value="1"/>
</dbReference>
<protein>
    <recommendedName>
        <fullName>UPF0652 protein C16A11.03c</fullName>
    </recommendedName>
</protein>
<reference key="1">
    <citation type="journal article" date="2002" name="Nature">
        <title>The genome sequence of Schizosaccharomyces pombe.</title>
        <authorList>
            <person name="Wood V."/>
            <person name="Gwilliam R."/>
            <person name="Rajandream M.A."/>
            <person name="Lyne M.H."/>
            <person name="Lyne R."/>
            <person name="Stewart A."/>
            <person name="Sgouros J.G."/>
            <person name="Peat N."/>
            <person name="Hayles J."/>
            <person name="Baker S.G."/>
            <person name="Basham D."/>
            <person name="Bowman S."/>
            <person name="Brooks K."/>
            <person name="Brown D."/>
            <person name="Brown S."/>
            <person name="Chillingworth T."/>
            <person name="Churcher C.M."/>
            <person name="Collins M."/>
            <person name="Connor R."/>
            <person name="Cronin A."/>
            <person name="Davis P."/>
            <person name="Feltwell T."/>
            <person name="Fraser A."/>
            <person name="Gentles S."/>
            <person name="Goble A."/>
            <person name="Hamlin N."/>
            <person name="Harris D.E."/>
            <person name="Hidalgo J."/>
            <person name="Hodgson G."/>
            <person name="Holroyd S."/>
            <person name="Hornsby T."/>
            <person name="Howarth S."/>
            <person name="Huckle E.J."/>
            <person name="Hunt S."/>
            <person name="Jagels K."/>
            <person name="James K.D."/>
            <person name="Jones L."/>
            <person name="Jones M."/>
            <person name="Leather S."/>
            <person name="McDonald S."/>
            <person name="McLean J."/>
            <person name="Mooney P."/>
            <person name="Moule S."/>
            <person name="Mungall K.L."/>
            <person name="Murphy L.D."/>
            <person name="Niblett D."/>
            <person name="Odell C."/>
            <person name="Oliver K."/>
            <person name="O'Neil S."/>
            <person name="Pearson D."/>
            <person name="Quail M.A."/>
            <person name="Rabbinowitsch E."/>
            <person name="Rutherford K.M."/>
            <person name="Rutter S."/>
            <person name="Saunders D."/>
            <person name="Seeger K."/>
            <person name="Sharp S."/>
            <person name="Skelton J."/>
            <person name="Simmonds M.N."/>
            <person name="Squares R."/>
            <person name="Squares S."/>
            <person name="Stevens K."/>
            <person name="Taylor K."/>
            <person name="Taylor R.G."/>
            <person name="Tivey A."/>
            <person name="Walsh S.V."/>
            <person name="Warren T."/>
            <person name="Whitehead S."/>
            <person name="Woodward J.R."/>
            <person name="Volckaert G."/>
            <person name="Aert R."/>
            <person name="Robben J."/>
            <person name="Grymonprez B."/>
            <person name="Weltjens I."/>
            <person name="Vanstreels E."/>
            <person name="Rieger M."/>
            <person name="Schaefer M."/>
            <person name="Mueller-Auer S."/>
            <person name="Gabel C."/>
            <person name="Fuchs M."/>
            <person name="Duesterhoeft A."/>
            <person name="Fritzc C."/>
            <person name="Holzer E."/>
            <person name="Moestl D."/>
            <person name="Hilbert H."/>
            <person name="Borzym K."/>
            <person name="Langer I."/>
            <person name="Beck A."/>
            <person name="Lehrach H."/>
            <person name="Reinhardt R."/>
            <person name="Pohl T.M."/>
            <person name="Eger P."/>
            <person name="Zimmermann W."/>
            <person name="Wedler H."/>
            <person name="Wambutt R."/>
            <person name="Purnelle B."/>
            <person name="Goffeau A."/>
            <person name="Cadieu E."/>
            <person name="Dreano S."/>
            <person name="Gloux S."/>
            <person name="Lelaure V."/>
            <person name="Mottier S."/>
            <person name="Galibert F."/>
            <person name="Aves S.J."/>
            <person name="Xiang Z."/>
            <person name="Hunt C."/>
            <person name="Moore K."/>
            <person name="Hurst S.M."/>
            <person name="Lucas M."/>
            <person name="Rochet M."/>
            <person name="Gaillardin C."/>
            <person name="Tallada V.A."/>
            <person name="Garzon A."/>
            <person name="Thode G."/>
            <person name="Daga R.R."/>
            <person name="Cruzado L."/>
            <person name="Jimenez J."/>
            <person name="Sanchez M."/>
            <person name="del Rey F."/>
            <person name="Benito J."/>
            <person name="Dominguez A."/>
            <person name="Revuelta J.L."/>
            <person name="Moreno S."/>
            <person name="Armstrong J."/>
            <person name="Forsburg S.L."/>
            <person name="Cerutti L."/>
            <person name="Lowe T."/>
            <person name="McCombie W.R."/>
            <person name="Paulsen I."/>
            <person name="Potashkin J."/>
            <person name="Shpakovski G.V."/>
            <person name="Ussery D."/>
            <person name="Barrell B.G."/>
            <person name="Nurse P."/>
        </authorList>
    </citation>
    <scope>NUCLEOTIDE SEQUENCE [LARGE SCALE GENOMIC DNA]</scope>
    <source>
        <strain>972 / ATCC 24843</strain>
    </source>
</reference>
<reference key="2">
    <citation type="journal article" date="2006" name="Nat. Biotechnol.">
        <title>ORFeome cloning and global analysis of protein localization in the fission yeast Schizosaccharomyces pombe.</title>
        <authorList>
            <person name="Matsuyama A."/>
            <person name="Arai R."/>
            <person name="Yashiroda Y."/>
            <person name="Shirai A."/>
            <person name="Kamata A."/>
            <person name="Sekido S."/>
            <person name="Kobayashi Y."/>
            <person name="Hashimoto A."/>
            <person name="Hamamoto M."/>
            <person name="Hiraoka Y."/>
            <person name="Horinouchi S."/>
            <person name="Yoshida M."/>
        </authorList>
    </citation>
    <scope>SUBCELLULAR LOCATION [LARGE SCALE ANALYSIS]</scope>
</reference>
<gene>
    <name type="ORF">SPCC16A11.03c</name>
</gene>
<sequence>MSIAQLFNQSWVEKSKYVPVRLSDEERKILSLLEAALEVIDYTGHVDIISYTTRTKLMVKYLNEMCSIVMGLVTAMDIKAGRDLLIGRDHKSNARFFQTVFEIGRRYKIMNPEKMRATYGAVMYMCQDSLIPDVRSQLGFDFVSPIKTVYNVLEKHKLLGLLEEKQLLNNLLKQSDPQSNANAKAELLKEREEASETLLKKYNPGKDEKLQKVLTDCFASLADHEAFLLANRNPVEKMRAYLHKFFNPHDTKNGSLKIGYMTGAKLNHDHKTQFFYVDQSLVFWSCMMDQMFLLWLESDASLLDKHSRYFISDTGQGLNRVQLCPLVRSTVTRILSSVQKQQEIPWMGSSVIHLGDRDVPNALMFIDKYRQVPHILAPLVKVLQQLEFLRDPYLVQYIENEYGSVNGLQKTILLDFFRHGFNGQGSDGGSCIDGRLTSAWNWTNEITKKKYYRILLMSGFLNFEGI</sequence>
<organism>
    <name type="scientific">Schizosaccharomyces pombe (strain 972 / ATCC 24843)</name>
    <name type="common">Fission yeast</name>
    <dbReference type="NCBI Taxonomy" id="284812"/>
    <lineage>
        <taxon>Eukaryota</taxon>
        <taxon>Fungi</taxon>
        <taxon>Dikarya</taxon>
        <taxon>Ascomycota</taxon>
        <taxon>Taphrinomycotina</taxon>
        <taxon>Schizosaccharomycetes</taxon>
        <taxon>Schizosaccharomycetales</taxon>
        <taxon>Schizosaccharomycetaceae</taxon>
        <taxon>Schizosaccharomyces</taxon>
    </lineage>
</organism>
<accession>Q9USN2</accession>
<comment type="subcellular location">
    <subcellularLocation>
        <location evidence="1">Cytoplasm</location>
    </subcellularLocation>
    <subcellularLocation>
        <location evidence="1">Nucleus</location>
    </subcellularLocation>
</comment>
<comment type="similarity">
    <text evidence="2">Belongs to the UPF0652 family.</text>
</comment>
<keyword id="KW-0963">Cytoplasm</keyword>
<keyword id="KW-0539">Nucleus</keyword>
<keyword id="KW-1185">Reference proteome</keyword>